<evidence type="ECO:0000255" key="1">
    <source>
        <dbReference type="HAMAP-Rule" id="MF_01445"/>
    </source>
</evidence>
<protein>
    <recommendedName>
        <fullName evidence="1">tRNA N6-adenosine threonylcarbamoyltransferase</fullName>
        <ecNumber evidence="1">2.3.1.234</ecNumber>
    </recommendedName>
    <alternativeName>
        <fullName evidence="1">N6-L-threonylcarbamoyladenine synthase</fullName>
        <shortName evidence="1">t(6)A synthase</shortName>
    </alternativeName>
    <alternativeName>
        <fullName evidence="1">t(6)A37 threonylcarbamoyladenosine biosynthesis protein TsaD</fullName>
    </alternativeName>
    <alternativeName>
        <fullName evidence="1">tRNA threonylcarbamoyladenosine biosynthesis protein TsaD</fullName>
    </alternativeName>
</protein>
<feature type="chain" id="PRO_1000184977" description="tRNA N6-adenosine threonylcarbamoyltransferase">
    <location>
        <begin position="1"/>
        <end position="364"/>
    </location>
</feature>
<feature type="binding site" evidence="1">
    <location>
        <position position="118"/>
    </location>
    <ligand>
        <name>Fe cation</name>
        <dbReference type="ChEBI" id="CHEBI:24875"/>
    </ligand>
</feature>
<feature type="binding site" evidence="1">
    <location>
        <position position="122"/>
    </location>
    <ligand>
        <name>Fe cation</name>
        <dbReference type="ChEBI" id="CHEBI:24875"/>
    </ligand>
</feature>
<feature type="binding site" evidence="1">
    <location>
        <begin position="140"/>
        <end position="144"/>
    </location>
    <ligand>
        <name>substrate</name>
    </ligand>
</feature>
<feature type="binding site" evidence="1">
    <location>
        <position position="173"/>
    </location>
    <ligand>
        <name>substrate</name>
    </ligand>
</feature>
<feature type="binding site" evidence="1">
    <location>
        <position position="186"/>
    </location>
    <ligand>
        <name>substrate</name>
    </ligand>
</feature>
<feature type="binding site" evidence="1">
    <location>
        <position position="288"/>
    </location>
    <ligand>
        <name>substrate</name>
    </ligand>
</feature>
<feature type="binding site" evidence="1">
    <location>
        <position position="316"/>
    </location>
    <ligand>
        <name>Fe cation</name>
        <dbReference type="ChEBI" id="CHEBI:24875"/>
    </ligand>
</feature>
<sequence length="364" mass="37136">MSRPLTFLGIESSCDDTAAAVVRADGARAEILSSVVDGQTALHAAFGGVVPEIAARAHAERLDLCVERALEEAGLGLRDLDGIAVTAGPGLIGGVLSGVMLAKGLAAGTGLPLVGVNHLAGHALTPRLTDGLAFPYLMLLVSGGHCQFLIARGAEEFSRLGGSIDDAPGEAFDKTAKLLGLPQPGGPSVEAEAATGDPRRFAFPRPMLDRPGCDMSFSGLKTALLRARDGLVAEKGGLTRADRADLCAGFQAAVVEVLAEKTRRALAVYAAEGAAEPALAVAGGVAANGPIRAALTSVAEAAGVRFLAPPLRLCTDNAAMIAWAGIERFRAGGRDGMELSARPRWPLDRSAPALIGSGRKGAKA</sequence>
<name>TSAD_CERSK</name>
<accession>B9KRE8</accession>
<gene>
    <name evidence="1" type="primary">tsaD</name>
    <name type="synonym">gcp</name>
    <name type="ordered locus">RSKD131_2902</name>
</gene>
<reference key="1">
    <citation type="journal article" date="2009" name="J. Bacteriol.">
        <title>Complete genome sequence of Rhodobacter sphaeroides KD131.</title>
        <authorList>
            <person name="Lim S.-K."/>
            <person name="Kim S.J."/>
            <person name="Cha S.H."/>
            <person name="Oh Y.-K."/>
            <person name="Rhee H.-J."/>
            <person name="Kim M.-S."/>
            <person name="Lee J.K."/>
        </authorList>
    </citation>
    <scope>NUCLEOTIDE SEQUENCE [LARGE SCALE GENOMIC DNA]</scope>
    <source>
        <strain>KD131 / KCTC 12085</strain>
    </source>
</reference>
<comment type="function">
    <text evidence="1">Required for the formation of a threonylcarbamoyl group on adenosine at position 37 (t(6)A37) in tRNAs that read codons beginning with adenine. Is involved in the transfer of the threonylcarbamoyl moiety of threonylcarbamoyl-AMP (TC-AMP) to the N6 group of A37, together with TsaE and TsaB. TsaD likely plays a direct catalytic role in this reaction.</text>
</comment>
<comment type="catalytic activity">
    <reaction evidence="1">
        <text>L-threonylcarbamoyladenylate + adenosine(37) in tRNA = N(6)-L-threonylcarbamoyladenosine(37) in tRNA + AMP + H(+)</text>
        <dbReference type="Rhea" id="RHEA:37059"/>
        <dbReference type="Rhea" id="RHEA-COMP:10162"/>
        <dbReference type="Rhea" id="RHEA-COMP:10163"/>
        <dbReference type="ChEBI" id="CHEBI:15378"/>
        <dbReference type="ChEBI" id="CHEBI:73682"/>
        <dbReference type="ChEBI" id="CHEBI:74411"/>
        <dbReference type="ChEBI" id="CHEBI:74418"/>
        <dbReference type="ChEBI" id="CHEBI:456215"/>
        <dbReference type="EC" id="2.3.1.234"/>
    </reaction>
</comment>
<comment type="cofactor">
    <cofactor evidence="1">
        <name>Fe(2+)</name>
        <dbReference type="ChEBI" id="CHEBI:29033"/>
    </cofactor>
    <text evidence="1">Binds 1 Fe(2+) ion per subunit.</text>
</comment>
<comment type="subcellular location">
    <subcellularLocation>
        <location evidence="1">Cytoplasm</location>
    </subcellularLocation>
</comment>
<comment type="similarity">
    <text evidence="1">Belongs to the KAE1 / TsaD family.</text>
</comment>
<dbReference type="EC" id="2.3.1.234" evidence="1"/>
<dbReference type="EMBL" id="CP001150">
    <property type="protein sequence ID" value="ACM02762.1"/>
    <property type="molecule type" value="Genomic_DNA"/>
</dbReference>
<dbReference type="RefSeq" id="WP_015921745.1">
    <property type="nucleotide sequence ID" value="NC_011963.1"/>
</dbReference>
<dbReference type="SMR" id="B9KRE8"/>
<dbReference type="GeneID" id="67448274"/>
<dbReference type="KEGG" id="rsk:RSKD131_2902"/>
<dbReference type="HOGENOM" id="CLU_023208_0_2_5"/>
<dbReference type="GO" id="GO:0005737">
    <property type="term" value="C:cytoplasm"/>
    <property type="evidence" value="ECO:0007669"/>
    <property type="project" value="UniProtKB-SubCell"/>
</dbReference>
<dbReference type="GO" id="GO:0005506">
    <property type="term" value="F:iron ion binding"/>
    <property type="evidence" value="ECO:0007669"/>
    <property type="project" value="UniProtKB-UniRule"/>
</dbReference>
<dbReference type="GO" id="GO:0061711">
    <property type="term" value="F:N(6)-L-threonylcarbamoyladenine synthase activity"/>
    <property type="evidence" value="ECO:0007669"/>
    <property type="project" value="UniProtKB-EC"/>
</dbReference>
<dbReference type="GO" id="GO:0002949">
    <property type="term" value="P:tRNA threonylcarbamoyladenosine modification"/>
    <property type="evidence" value="ECO:0007669"/>
    <property type="project" value="UniProtKB-UniRule"/>
</dbReference>
<dbReference type="CDD" id="cd24133">
    <property type="entry name" value="ASKHA_NBD_TsaD_bac"/>
    <property type="match status" value="1"/>
</dbReference>
<dbReference type="FunFam" id="3.30.420.40:FF:000012">
    <property type="entry name" value="tRNA N6-adenosine threonylcarbamoyltransferase"/>
    <property type="match status" value="1"/>
</dbReference>
<dbReference type="Gene3D" id="3.30.420.40">
    <property type="match status" value="2"/>
</dbReference>
<dbReference type="HAMAP" id="MF_01445">
    <property type="entry name" value="TsaD"/>
    <property type="match status" value="1"/>
</dbReference>
<dbReference type="InterPro" id="IPR043129">
    <property type="entry name" value="ATPase_NBD"/>
</dbReference>
<dbReference type="InterPro" id="IPR000905">
    <property type="entry name" value="Gcp-like_dom"/>
</dbReference>
<dbReference type="InterPro" id="IPR017861">
    <property type="entry name" value="KAE1/TsaD"/>
</dbReference>
<dbReference type="InterPro" id="IPR022450">
    <property type="entry name" value="TsaD"/>
</dbReference>
<dbReference type="NCBIfam" id="TIGR00329">
    <property type="entry name" value="gcp_kae1"/>
    <property type="match status" value="1"/>
</dbReference>
<dbReference type="NCBIfam" id="TIGR03723">
    <property type="entry name" value="T6A_TsaD_YgjD"/>
    <property type="match status" value="1"/>
</dbReference>
<dbReference type="PANTHER" id="PTHR11735">
    <property type="entry name" value="TRNA N6-ADENOSINE THREONYLCARBAMOYLTRANSFERASE"/>
    <property type="match status" value="1"/>
</dbReference>
<dbReference type="PANTHER" id="PTHR11735:SF6">
    <property type="entry name" value="TRNA N6-ADENOSINE THREONYLCARBAMOYLTRANSFERASE, MITOCHONDRIAL"/>
    <property type="match status" value="1"/>
</dbReference>
<dbReference type="Pfam" id="PF00814">
    <property type="entry name" value="TsaD"/>
    <property type="match status" value="1"/>
</dbReference>
<dbReference type="PRINTS" id="PR00789">
    <property type="entry name" value="OSIALOPTASE"/>
</dbReference>
<dbReference type="SUPFAM" id="SSF53067">
    <property type="entry name" value="Actin-like ATPase domain"/>
    <property type="match status" value="2"/>
</dbReference>
<organism>
    <name type="scientific">Cereibacter sphaeroides (strain KD131 / KCTC 12085)</name>
    <name type="common">Rhodobacter sphaeroides</name>
    <dbReference type="NCBI Taxonomy" id="557760"/>
    <lineage>
        <taxon>Bacteria</taxon>
        <taxon>Pseudomonadati</taxon>
        <taxon>Pseudomonadota</taxon>
        <taxon>Alphaproteobacteria</taxon>
        <taxon>Rhodobacterales</taxon>
        <taxon>Paracoccaceae</taxon>
        <taxon>Cereibacter</taxon>
    </lineage>
</organism>
<keyword id="KW-0012">Acyltransferase</keyword>
<keyword id="KW-0963">Cytoplasm</keyword>
<keyword id="KW-0408">Iron</keyword>
<keyword id="KW-0479">Metal-binding</keyword>
<keyword id="KW-0808">Transferase</keyword>
<keyword id="KW-0819">tRNA processing</keyword>
<proteinExistence type="inferred from homology"/>